<evidence type="ECO:0000250" key="1"/>
<evidence type="ECO:0000250" key="2">
    <source>
        <dbReference type="UniProtKB" id="P01189"/>
    </source>
</evidence>
<evidence type="ECO:0000250" key="3">
    <source>
        <dbReference type="UniProtKB" id="P01191"/>
    </source>
</evidence>
<evidence type="ECO:0000250" key="4">
    <source>
        <dbReference type="UniProtKB" id="P01193"/>
    </source>
</evidence>
<evidence type="ECO:0000256" key="5">
    <source>
        <dbReference type="SAM" id="MobiDB-lite"/>
    </source>
</evidence>
<evidence type="ECO:0000269" key="6">
    <source>
    </source>
</evidence>
<evidence type="ECO:0000269" key="7">
    <source>
    </source>
</evidence>
<evidence type="ECO:0000269" key="8">
    <source>
    </source>
</evidence>
<evidence type="ECO:0000269" key="9">
    <source>
    </source>
</evidence>
<evidence type="ECO:0000305" key="10"/>
<sequence length="265" mass="29260">MPRLCSSRSGALLLALLLQASMEVRGWCLESSQCQDLTTESNLLACIRACKPDLSAETPVFPGNGDEQPLTENPRKYVMGHFRWDRFGRRNGSSSSGVGGAAQKREEEVAVGEGPGPRGDDAETGPREDKRSYSMEHFRWGKPVGKKRRPVKVYPNGAEDESAQAFPLEFKRELTGERLEQARGPEAQAESAAARAELEYGLVAEAEAEAAEKKDSGPYKMEHFRWGSPPKDKRYGGFMTSEKSQTPLVTLFKNAIIKNAHKKGQ</sequence>
<accession>P01190</accession>
<accession>Q05B64</accession>
<accession>Q28166</accession>
<accession>Q28167</accession>
<accession>Q28168</accession>
<name>COLI_BOVIN</name>
<feature type="signal peptide" evidence="1">
    <location>
        <begin position="1"/>
        <end position="26"/>
    </location>
</feature>
<feature type="peptide" id="PRO_0000024943" description="NPP">
    <location>
        <begin position="27"/>
        <end position="103"/>
    </location>
</feature>
<feature type="peptide" id="PRO_0000024944" description="Melanotropin gamma">
    <location>
        <begin position="77"/>
        <end position="87"/>
    </location>
</feature>
<feature type="propeptide" id="PRO_0000024945">
    <location>
        <begin position="106"/>
        <end position="129"/>
    </location>
</feature>
<feature type="peptide" id="PRO_0000024946" description="Corticotropin">
    <location>
        <begin position="132"/>
        <end position="170"/>
    </location>
</feature>
<feature type="peptide" id="PRO_0000024947" description="Melanocyte-stimulating hormone alpha">
    <location>
        <begin position="132"/>
        <end position="144"/>
    </location>
</feature>
<feature type="peptide" id="PRO_0000024948" description="Corticotropin-like intermediary peptide">
    <location>
        <begin position="150"/>
        <end position="170"/>
    </location>
</feature>
<feature type="peptide" id="PRO_0000024949" description="Lipotropin beta">
    <location>
        <begin position="173"/>
        <end position="265"/>
    </location>
</feature>
<feature type="peptide" id="PRO_0000024950" description="Lipotropin gamma">
    <location>
        <begin position="173"/>
        <end position="232"/>
    </location>
</feature>
<feature type="peptide" id="PRO_0000024951" description="Melanocyte-stimulating hormone beta">
    <location>
        <begin position="215"/>
        <end position="232"/>
    </location>
</feature>
<feature type="peptide" id="PRO_0000024952" description="Beta-endorphin">
    <location>
        <begin position="235"/>
        <end position="265"/>
    </location>
</feature>
<feature type="peptide" id="PRO_0000024953" description="Met-enkephalin">
    <location>
        <begin position="235"/>
        <end position="239"/>
    </location>
</feature>
<feature type="region of interest" description="Disordered" evidence="5">
    <location>
        <begin position="89"/>
        <end position="138"/>
    </location>
</feature>
<feature type="region of interest" description="Disordered" evidence="5">
    <location>
        <begin position="209"/>
        <end position="240"/>
    </location>
</feature>
<feature type="compositionally biased region" description="Basic and acidic residues" evidence="5">
    <location>
        <begin position="118"/>
        <end position="138"/>
    </location>
</feature>
<feature type="compositionally biased region" description="Basic and acidic residues" evidence="5">
    <location>
        <begin position="210"/>
        <end position="235"/>
    </location>
</feature>
<feature type="modified residue" description="Phenylalanine amide" evidence="9">
    <location>
        <position position="87"/>
    </location>
</feature>
<feature type="modified residue" description="N-acetylserine; in Corticotropin" evidence="3">
    <location>
        <position position="132"/>
    </location>
</feature>
<feature type="modified residue" description="Valine amide" evidence="6">
    <location>
        <position position="144"/>
    </location>
</feature>
<feature type="modified residue" description="Phosphoserine" evidence="2">
    <location>
        <position position="162"/>
    </location>
</feature>
<feature type="modified residue" description="Pyrrolidone carboxylic acid (Glu); partial" evidence="7">
    <location>
        <position position="173"/>
    </location>
</feature>
<feature type="modified residue" description="Sulfotyrosine" evidence="7">
    <location>
        <position position="200"/>
    </location>
</feature>
<feature type="glycosylation site" id="CAR_000202" description="O-linked (GalNAc...) threonine" evidence="8">
    <location>
        <position position="71"/>
    </location>
</feature>
<feature type="glycosylation site" id="CAR_000034" description="N-linked (GlcNAc...) asparagine" evidence="8">
    <location>
        <position position="91"/>
    </location>
</feature>
<feature type="disulfide bond" evidence="8">
    <location>
        <begin position="28"/>
        <end position="50"/>
    </location>
</feature>
<feature type="disulfide bond" evidence="8">
    <location>
        <begin position="34"/>
        <end position="46"/>
    </location>
</feature>
<feature type="sequence conflict" description="In Ref. 2; AAA30354." evidence="10" ref="2">
    <original>G</original>
    <variation>A</variation>
    <location>
        <position position="10"/>
    </location>
</feature>
<feature type="sequence conflict" description="In Ref. 2; AAA30354." evidence="10" ref="2">
    <original>R</original>
    <variation>P</variation>
    <location>
        <position position="139"/>
    </location>
</feature>
<feature type="sequence conflict" description="In Ref. 6; AAA30718." evidence="10" ref="6">
    <location>
        <position position="161"/>
    </location>
</feature>
<feature type="sequence conflict" description="In Ref. 11; AA sequence." evidence="10" ref="11">
    <original>Q</original>
    <variation>G</variation>
    <location>
        <position position="188"/>
    </location>
</feature>
<feature type="sequence conflict" description="In Ref. 6; AAA30718." evidence="10" ref="6">
    <original>ES</original>
    <variation>D</variation>
    <location>
        <begin position="190"/>
        <end position="191"/>
    </location>
</feature>
<feature type="sequence conflict" description="In Ref. 2; AAA30354." evidence="10" ref="2">
    <original>A</original>
    <variation>P</variation>
    <location>
        <position position="196"/>
    </location>
</feature>
<gene>
    <name type="primary">POMC</name>
</gene>
<dbReference type="EMBL" id="V00107">
    <property type="protein sequence ID" value="CAA23441.1"/>
    <property type="molecule type" value="mRNA"/>
</dbReference>
<dbReference type="EMBL" id="V00107">
    <property type="protein sequence ID" value="CAA23440.1"/>
    <property type="molecule type" value="mRNA"/>
</dbReference>
<dbReference type="EMBL" id="M25587">
    <property type="protein sequence ID" value="AAA30354.1"/>
    <property type="molecule type" value="mRNA"/>
</dbReference>
<dbReference type="EMBL" id="J00021">
    <property type="protein sequence ID" value="AAB59262.1"/>
    <property type="molecule type" value="Genomic_DNA"/>
</dbReference>
<dbReference type="EMBL" id="J00019">
    <property type="protein sequence ID" value="AAB59262.1"/>
    <property type="status" value="JOINED"/>
    <property type="molecule type" value="Genomic_DNA"/>
</dbReference>
<dbReference type="EMBL" id="BC122728">
    <property type="protein sequence ID" value="AAI22729.1"/>
    <property type="molecule type" value="mRNA"/>
</dbReference>
<dbReference type="EMBL" id="M23814">
    <property type="protein sequence ID" value="AAA30414.1"/>
    <property type="status" value="ALT_INIT"/>
    <property type="molecule type" value="mRNA"/>
</dbReference>
<dbReference type="EMBL" id="M10723">
    <property type="protein sequence ID" value="AAA30718.1"/>
    <property type="molecule type" value="mRNA"/>
</dbReference>
<dbReference type="PIR" id="A93206">
    <property type="entry name" value="CTBOP"/>
</dbReference>
<dbReference type="RefSeq" id="NP_776576.1">
    <property type="nucleotide sequence ID" value="NM_174151.1"/>
</dbReference>
<dbReference type="RefSeq" id="XP_005212977.1">
    <property type="nucleotide sequence ID" value="XM_005212920.3"/>
</dbReference>
<dbReference type="BMRB" id="P01190"/>
<dbReference type="SMR" id="P01190"/>
<dbReference type="FunCoup" id="P01190">
    <property type="interactions" value="604"/>
</dbReference>
<dbReference type="STRING" id="9913.ENSBTAP00000010386"/>
<dbReference type="GlyConnect" id="113">
    <property type="glycosylation" value="12 N-Linked glycans (1 site), 4 O-Linked glycans (1 site)"/>
</dbReference>
<dbReference type="GlyCosmos" id="P01190">
    <property type="glycosylation" value="2 sites, 29 glycans"/>
</dbReference>
<dbReference type="GlyGen" id="P01190">
    <property type="glycosylation" value="2 sites"/>
</dbReference>
<dbReference type="PaxDb" id="9913-ENSBTAP00000010386"/>
<dbReference type="Ensembl" id="ENSBTAT00000010386.3">
    <property type="protein sequence ID" value="ENSBTAP00000010386.2"/>
    <property type="gene ID" value="ENSBTAG00000007897.3"/>
</dbReference>
<dbReference type="GeneID" id="281416"/>
<dbReference type="KEGG" id="bta:281416"/>
<dbReference type="CTD" id="5443"/>
<dbReference type="VEuPathDB" id="HostDB:ENSBTAG00000007897"/>
<dbReference type="VGNC" id="VGNC:33155">
    <property type="gene designation" value="POMC"/>
</dbReference>
<dbReference type="eggNOG" id="ENOG502RZNY">
    <property type="taxonomic scope" value="Eukaryota"/>
</dbReference>
<dbReference type="GeneTree" id="ENSGT00390000016811"/>
<dbReference type="HOGENOM" id="CLU_094632_0_0_1"/>
<dbReference type="InParanoid" id="P01190"/>
<dbReference type="OMA" id="NIRKYVM"/>
<dbReference type="OrthoDB" id="8962839at2759"/>
<dbReference type="TreeFam" id="TF333215"/>
<dbReference type="Reactome" id="R-BTA-111885">
    <property type="pathway name" value="Opioid Signalling"/>
</dbReference>
<dbReference type="Reactome" id="R-BTA-193048">
    <property type="pathway name" value="Androgen biosynthesis"/>
</dbReference>
<dbReference type="Reactome" id="R-BTA-194002">
    <property type="pathway name" value="Glucocorticoid biosynthesis"/>
</dbReference>
<dbReference type="Reactome" id="R-BTA-202040">
    <property type="pathway name" value="G-protein activation"/>
</dbReference>
<dbReference type="Reactome" id="R-BTA-209952">
    <property type="pathway name" value="Peptide hormone biosynthesis"/>
</dbReference>
<dbReference type="Reactome" id="R-BTA-211976">
    <property type="pathway name" value="Endogenous sterols"/>
</dbReference>
<dbReference type="Reactome" id="R-BTA-375276">
    <property type="pathway name" value="Peptide ligand-binding receptors"/>
</dbReference>
<dbReference type="Reactome" id="R-BTA-418555">
    <property type="pathway name" value="G alpha (s) signalling events"/>
</dbReference>
<dbReference type="Reactome" id="R-BTA-418594">
    <property type="pathway name" value="G alpha (i) signalling events"/>
</dbReference>
<dbReference type="Proteomes" id="UP000009136">
    <property type="component" value="Chromosome 11"/>
</dbReference>
<dbReference type="Bgee" id="ENSBTAG00000007897">
    <property type="expression patterns" value="Expressed in neurohypophysis and 100 other cell types or tissues"/>
</dbReference>
<dbReference type="GO" id="GO:0005615">
    <property type="term" value="C:extracellular space"/>
    <property type="evidence" value="ECO:0000318"/>
    <property type="project" value="GO_Central"/>
</dbReference>
<dbReference type="GO" id="GO:0030141">
    <property type="term" value="C:secretory granule"/>
    <property type="evidence" value="ECO:0000318"/>
    <property type="project" value="GO_Central"/>
</dbReference>
<dbReference type="GO" id="GO:0001664">
    <property type="term" value="F:G protein-coupled receptor binding"/>
    <property type="evidence" value="ECO:0000318"/>
    <property type="project" value="GO_Central"/>
</dbReference>
<dbReference type="GO" id="GO:0005179">
    <property type="term" value="F:hormone activity"/>
    <property type="evidence" value="ECO:0007669"/>
    <property type="project" value="UniProtKB-KW"/>
</dbReference>
<dbReference type="GO" id="GO:0070996">
    <property type="term" value="F:type 1 melanocortin receptor binding"/>
    <property type="evidence" value="ECO:0007669"/>
    <property type="project" value="Ensembl"/>
</dbReference>
<dbReference type="GO" id="GO:0031781">
    <property type="term" value="F:type 3 melanocortin receptor binding"/>
    <property type="evidence" value="ECO:0007669"/>
    <property type="project" value="Ensembl"/>
</dbReference>
<dbReference type="GO" id="GO:0031782">
    <property type="term" value="F:type 4 melanocortin receptor binding"/>
    <property type="evidence" value="ECO:0007669"/>
    <property type="project" value="Ensembl"/>
</dbReference>
<dbReference type="GO" id="GO:0019722">
    <property type="term" value="P:calcium-mediated signaling"/>
    <property type="evidence" value="ECO:0007669"/>
    <property type="project" value="Ensembl"/>
</dbReference>
<dbReference type="GO" id="GO:0007267">
    <property type="term" value="P:cell-cell signaling"/>
    <property type="evidence" value="ECO:0007669"/>
    <property type="project" value="Ensembl"/>
</dbReference>
<dbReference type="GO" id="GO:0033059">
    <property type="term" value="P:cellular pigmentation"/>
    <property type="evidence" value="ECO:0007669"/>
    <property type="project" value="Ensembl"/>
</dbReference>
<dbReference type="GO" id="GO:0006091">
    <property type="term" value="P:generation of precursor metabolites and energy"/>
    <property type="evidence" value="ECO:0007669"/>
    <property type="project" value="Ensembl"/>
</dbReference>
<dbReference type="GO" id="GO:0042593">
    <property type="term" value="P:glucose homeostasis"/>
    <property type="evidence" value="ECO:0007669"/>
    <property type="project" value="Ensembl"/>
</dbReference>
<dbReference type="GO" id="GO:0032720">
    <property type="term" value="P:negative regulation of tumor necrosis factor production"/>
    <property type="evidence" value="ECO:0007669"/>
    <property type="project" value="Ensembl"/>
</dbReference>
<dbReference type="GO" id="GO:0007218">
    <property type="term" value="P:neuropeptide signaling pathway"/>
    <property type="evidence" value="ECO:0007669"/>
    <property type="project" value="UniProtKB-KW"/>
</dbReference>
<dbReference type="GO" id="GO:0106071">
    <property type="term" value="P:positive regulation of adenylate cyclase-activating G protein-coupled receptor signaling pathway"/>
    <property type="evidence" value="ECO:0007669"/>
    <property type="project" value="Ensembl"/>
</dbReference>
<dbReference type="GO" id="GO:0140668">
    <property type="term" value="P:positive regulation of oxytocin production"/>
    <property type="evidence" value="ECO:0007669"/>
    <property type="project" value="Ensembl"/>
</dbReference>
<dbReference type="GO" id="GO:0045944">
    <property type="term" value="P:positive regulation of transcription by RNA polymerase II"/>
    <property type="evidence" value="ECO:0007669"/>
    <property type="project" value="Ensembl"/>
</dbReference>
<dbReference type="GO" id="GO:0032098">
    <property type="term" value="P:regulation of appetite"/>
    <property type="evidence" value="ECO:0007669"/>
    <property type="project" value="Ensembl"/>
</dbReference>
<dbReference type="GO" id="GO:0008217">
    <property type="term" value="P:regulation of blood pressure"/>
    <property type="evidence" value="ECO:0007669"/>
    <property type="project" value="Ensembl"/>
</dbReference>
<dbReference type="GO" id="GO:2000852">
    <property type="term" value="P:regulation of corticosterone secretion"/>
    <property type="evidence" value="ECO:0000318"/>
    <property type="project" value="GO_Central"/>
</dbReference>
<dbReference type="GO" id="GO:0070873">
    <property type="term" value="P:regulation of glycogen metabolic process"/>
    <property type="evidence" value="ECO:0007669"/>
    <property type="project" value="Ensembl"/>
</dbReference>
<dbReference type="GO" id="GO:1990680">
    <property type="term" value="P:response to melanocyte-stimulating hormone"/>
    <property type="evidence" value="ECO:0007669"/>
    <property type="project" value="Ensembl"/>
</dbReference>
<dbReference type="InterPro" id="IPR013531">
    <property type="entry name" value="Mcrtin_ACTH_cent"/>
</dbReference>
<dbReference type="InterPro" id="IPR013593">
    <property type="entry name" value="Melanocortin_N"/>
</dbReference>
<dbReference type="InterPro" id="IPR013532">
    <property type="entry name" value="Opioid_neuropept"/>
</dbReference>
<dbReference type="InterPro" id="IPR001941">
    <property type="entry name" value="PMOC"/>
</dbReference>
<dbReference type="InterPro" id="IPR050878">
    <property type="entry name" value="POMC-derived_peptides"/>
</dbReference>
<dbReference type="PANTHER" id="PTHR11416">
    <property type="entry name" value="PRO-OPIOMELANOCORTIN"/>
    <property type="match status" value="1"/>
</dbReference>
<dbReference type="PANTHER" id="PTHR11416:SF7">
    <property type="entry name" value="PRO-OPIOMELANOCORTIN"/>
    <property type="match status" value="1"/>
</dbReference>
<dbReference type="Pfam" id="PF00976">
    <property type="entry name" value="ACTH_domain"/>
    <property type="match status" value="3"/>
</dbReference>
<dbReference type="Pfam" id="PF08384">
    <property type="entry name" value="NPP"/>
    <property type="match status" value="1"/>
</dbReference>
<dbReference type="Pfam" id="PF08035">
    <property type="entry name" value="Op_neuropeptide"/>
    <property type="match status" value="1"/>
</dbReference>
<dbReference type="PRINTS" id="PR00383">
    <property type="entry name" value="MELANOCORTIN"/>
</dbReference>
<dbReference type="SMART" id="SM01363">
    <property type="entry name" value="ACTH_domain"/>
    <property type="match status" value="3"/>
</dbReference>
<dbReference type="SMART" id="SM01364">
    <property type="entry name" value="NPP"/>
    <property type="match status" value="1"/>
</dbReference>
<dbReference type="SMART" id="SM01365">
    <property type="entry name" value="Op_neuropeptide"/>
    <property type="match status" value="1"/>
</dbReference>
<comment type="function">
    <molecule>Corticotropin</molecule>
    <text>Stimulates the adrenal glands to release cortisol.</text>
</comment>
<comment type="function">
    <molecule>Melanocyte-stimulating hormone alpha</molecule>
    <text>Anorexigenic peptide. Increases the pigmentation of skin by increasing melanin production in melanocytes.</text>
</comment>
<comment type="function">
    <molecule>Beta-endorphin</molecule>
    <text>Endogenous orexigenic opiate.</text>
</comment>
<comment type="function">
    <molecule>Met-enkephalin</molecule>
    <text>Endogenous opiate.</text>
</comment>
<comment type="subcellular location">
    <subcellularLocation>
        <location evidence="4">Secreted</location>
    </subcellularLocation>
    <text evidence="4">Melanocyte-stimulating hormone alpha and beta-endorphin are stored in separate granules in hypothalamic POMC neurons, suggesting that secretion may be under the control of different regulatory mechanisms.</text>
</comment>
<comment type="tissue specificity">
    <text>ACTH and MSH are produced by the pituitary gland.</text>
</comment>
<comment type="PTM">
    <text>Specific enzymatic cleavages at paired basic residues yield the different active peptides.</text>
</comment>
<comment type="similarity">
    <text evidence="10">Belongs to the POMC family.</text>
</comment>
<comment type="sequence caution" evidence="10">
    <conflict type="erroneous initiation">
        <sequence resource="EMBL-CDS" id="AAA30414"/>
    </conflict>
</comment>
<organism>
    <name type="scientific">Bos taurus</name>
    <name type="common">Bovine</name>
    <dbReference type="NCBI Taxonomy" id="9913"/>
    <lineage>
        <taxon>Eukaryota</taxon>
        <taxon>Metazoa</taxon>
        <taxon>Chordata</taxon>
        <taxon>Craniata</taxon>
        <taxon>Vertebrata</taxon>
        <taxon>Euteleostomi</taxon>
        <taxon>Mammalia</taxon>
        <taxon>Eutheria</taxon>
        <taxon>Laurasiatheria</taxon>
        <taxon>Artiodactyla</taxon>
        <taxon>Ruminantia</taxon>
        <taxon>Pecora</taxon>
        <taxon>Bovidae</taxon>
        <taxon>Bovinae</taxon>
        <taxon>Bos</taxon>
    </lineage>
</organism>
<keyword id="KW-0007">Acetylation</keyword>
<keyword id="KW-0027">Amidation</keyword>
<keyword id="KW-0165">Cleavage on pair of basic residues</keyword>
<keyword id="KW-0903">Direct protein sequencing</keyword>
<keyword id="KW-1015">Disulfide bond</keyword>
<keyword id="KW-0257">Endorphin</keyword>
<keyword id="KW-0325">Glycoprotein</keyword>
<keyword id="KW-0372">Hormone</keyword>
<keyword id="KW-0597">Phosphoprotein</keyword>
<keyword id="KW-0873">Pyrrolidone carboxylic acid</keyword>
<keyword id="KW-1185">Reference proteome</keyword>
<keyword id="KW-0964">Secreted</keyword>
<keyword id="KW-0732">Signal</keyword>
<keyword id="KW-0765">Sulfation</keyword>
<proteinExistence type="evidence at protein level"/>
<reference key="1">
    <citation type="journal article" date="1979" name="Nature">
        <title>Nucleotide sequence of cloned cDNA for bovine corticotropin-beta-lipotropin precursor.</title>
        <authorList>
            <person name="Nakanishi S."/>
            <person name="Inoue A."/>
            <person name="Kita T."/>
            <person name="Nakamura M."/>
            <person name="Chang A.C.Y."/>
            <person name="Cohen S.N."/>
            <person name="Numa S."/>
        </authorList>
    </citation>
    <scope>NUCLEOTIDE SEQUENCE [MRNA]</scope>
</reference>
<reference key="2">
    <citation type="journal article" date="1980" name="Ann. N. Y. Acad. Sci.">
        <title>Studies of cloned DNA encoding the structure for the bovine corticotropin-beta-lipotropin precursor protein.</title>
        <authorList>
            <person name="Cohen S.N."/>
            <person name="Chang A.C.Y."/>
            <person name="Nakanishi S."/>
            <person name="Inoue A."/>
            <person name="Kita T."/>
            <person name="Nakamura M."/>
            <person name="Numa S."/>
        </authorList>
    </citation>
    <scope>NUCLEOTIDE SEQUENCE [MRNA]</scope>
</reference>
<reference key="3">
    <citation type="journal article" date="1981" name="Eur. J. Biochem.">
        <title>Isolation and characterization of the bovine corticotropin/beta-lipotropin precursor gene.</title>
        <authorList>
            <person name="Nakanishi S."/>
            <person name="Teranishi Y."/>
            <person name="Watanabe Y."/>
            <person name="Notake M."/>
            <person name="Noda M."/>
            <person name="Kakidani H."/>
            <person name="Jingami H."/>
            <person name="Numa S."/>
        </authorList>
    </citation>
    <scope>NUCLEOTIDE SEQUENCE [GENOMIC DNA]</scope>
</reference>
<reference key="4">
    <citation type="submission" date="2006-08" db="EMBL/GenBank/DDBJ databases">
        <authorList>
            <consortium name="NIH - Mammalian Gene Collection (MGC) project"/>
        </authorList>
    </citation>
    <scope>NUCLEOTIDE SEQUENCE [LARGE SCALE MRNA]</scope>
    <source>
        <strain>Hereford</strain>
        <tissue>Hypothalamus</tissue>
    </source>
</reference>
<reference key="5">
    <citation type="journal article" date="1985" name="Mol. Biol. (Mosk.)">
        <title>Genetic engineering of peptide hormones.</title>
        <authorList>
            <person name="Rubtsov P.M."/>
            <person name="Chernov B.K."/>
            <person name="Gorbulev V.G."/>
            <person name="Parsadanyan A.S."/>
            <person name="Sverdlova P.S."/>
            <person name="Chupeeva V.V."/>
            <person name="Golova Y.B."/>
            <person name="Batchikova N.V."/>
            <person name="Zhvirblis G.S."/>
            <person name="Skryabin K.G."/>
            <person name="Baev A.A."/>
        </authorList>
    </citation>
    <scope>NUCLEOTIDE SEQUENCE [MRNA] OF 75-265</scope>
</reference>
<reference key="6">
    <citation type="journal article" date="1978" name="Proc. Natl. Acad. Sci. U.S.A.">
        <title>Construction of bacterial plasmids that contain the nucleotide sequence for bovine corticotropin-beta-lipotropin precursor.</title>
        <authorList>
            <person name="Nakanishi G."/>
            <person name="Inoue A."/>
            <person name="Kita T."/>
            <person name="Numa S."/>
            <person name="Chang A.C.Y."/>
            <person name="Cohen S.N."/>
            <person name="Nunberg J."/>
            <person name="Schimke R.T."/>
        </authorList>
    </citation>
    <scope>NUCLEOTIDE SEQUENCE [MRNA] OF 132-200</scope>
</reference>
<reference key="7">
    <citation type="journal article" date="1981" name="FEBS Lett.">
        <title>Isolation and characterization of a gamma 1-melanotropin-like peptide from bovine neurointermediate pituitary.</title>
        <authorList>
            <person name="Boehlen P."/>
            <person name="Esch F."/>
            <person name="Shibasaki T."/>
            <person name="Baird A."/>
            <person name="Ling N."/>
            <person name="Guillemin R."/>
        </authorList>
    </citation>
    <scope>PROTEIN SEQUENCE OF 77-87</scope>
    <scope>AMIDATION AT PHE-87</scope>
</reference>
<reference key="8">
    <citation type="journal article" date="1959" name="Lab. Invest.">
        <title>The relation of chemical structure to the biologic activity of pituitary hormones.</title>
        <authorList>
            <person name="Li C.H."/>
        </authorList>
    </citation>
    <scope>PROTEIN SEQUENCE OF 131-144</scope>
    <scope>AMIDATION AT VAL-144</scope>
</reference>
<reference key="9">
    <citation type="journal article" date="1958" name="J. Am. Chem. Soc.">
        <title>Isolation of melatonin, the pineal gland factor that lightens melanocytes.</title>
        <authorList>
            <person name="Li C.H."/>
            <person name="Dixon J.S."/>
            <person name="Chung D."/>
        </authorList>
    </citation>
    <scope>PROTEIN SEQUENCE OF 132-170</scope>
</reference>
<reference key="10">
    <citation type="journal article" date="1972" name="Biochem. Biophys. Res. Commun.">
        <title>Adrenocorticotropin 45. Revised amino acid sequences for sheep and bovine hormones.</title>
        <authorList>
            <person name="Li C.H."/>
        </authorList>
    </citation>
    <scope>SEQUENCE REVISION (CORTICOTROPIN)</scope>
</reference>
<reference key="11">
    <citation type="journal article" date="1973" name="Vopr. Med. Khim.">
        <title>Primary structure of the bovine beta-lipotropic hormone.</title>
        <authorList>
            <person name="Pankov Y.A."/>
        </authorList>
    </citation>
    <scope>PROTEIN SEQUENCE OF 173-265</scope>
</reference>
<reference key="12">
    <citation type="journal article" date="1957" name="J. Am. Chem. Soc.">
        <title>The isolation and structure of a melanocyte-stimulating hormone from bovine pituitary glands.</title>
        <authorList>
            <person name="Geschwind I.I."/>
            <person name="Li C.H."/>
            <person name="Barnafi L."/>
        </authorList>
    </citation>
    <scope>PROTEIN SEQUENCE OF 215-232</scope>
</reference>
<reference key="13">
    <citation type="journal article" date="1956" name="Nature">
        <title>Amino-acid sequence of a melanophore-stimulating peptide.</title>
        <authorList>
            <person name="Harris J.I."/>
            <person name="Roos P."/>
        </authorList>
    </citation>
    <scope>PROTEIN SEQUENCE OF 215-232</scope>
</reference>
<reference key="14">
    <citation type="journal article" date="1976" name="Proc. Natl. Acad. Sci. U.S.A.">
        <title>Morphine-like peptides in mammalian brain: isolation, structure elucidation, and interactions with the opiate receptor.</title>
        <authorList>
            <person name="Simantov R."/>
            <person name="Snyder S.H."/>
        </authorList>
    </citation>
    <scope>PROTEIN SEQUENCE OF 235-239</scope>
</reference>
<reference key="15">
    <citation type="journal article" date="1985" name="J. Chromatogr. A">
        <title>Use of reversed-phase and ion-exchange batch extraction in the purification of bovine pituitary peptides.</title>
        <authorList>
            <person name="James S."/>
            <person name="Bennett H.P.J."/>
        </authorList>
    </citation>
    <scope>GLYCOSYLATION AT THR-71 AND ASN-91</scope>
    <scope>DISULFIDE BONDS</scope>
</reference>
<reference key="16">
    <citation type="journal article" date="1990" name="J. Biol. Chem.">
        <title>Post-translational modification of bovine pro-opiomelanocortin. Tyrosine sulfation and pyroglutamate formation, a mass spectrometric study.</title>
        <authorList>
            <person name="Bateman A."/>
            <person name="Solomon S."/>
            <person name="Bennett H.P.J."/>
        </authorList>
    </citation>
    <scope>SULFATION AT TYR-200</scope>
    <scope>PYROGLUTAMATE FORMATION AT GLU-173</scope>
</reference>
<protein>
    <recommendedName>
        <fullName>Pro-opiomelanocortin</fullName>
        <shortName>POMC</shortName>
    </recommendedName>
    <alternativeName>
        <fullName>Corticotropin-lipotropin</fullName>
    </alternativeName>
    <component>
        <recommendedName>
            <fullName>NPP</fullName>
        </recommendedName>
    </component>
    <component>
        <recommendedName>
            <fullName>Melanotropin gamma</fullName>
        </recommendedName>
        <alternativeName>
            <fullName>Gamma-MSH</fullName>
        </alternativeName>
    </component>
    <component>
        <recommendedName>
            <fullName>Corticotropin</fullName>
        </recommendedName>
        <alternativeName>
            <fullName>Adrenocorticotropic hormone</fullName>
            <shortName>ACTH</shortName>
        </alternativeName>
    </component>
    <component>
        <recommendedName>
            <fullName>Melanocyte-stimulating hormone alpha</fullName>
            <shortName>Alpha-MSH</shortName>
        </recommendedName>
        <alternativeName>
            <fullName>Melanotropin alpha</fullName>
        </alternativeName>
    </component>
    <component>
        <recommendedName>
            <fullName>Corticotropin-like intermediary peptide</fullName>
            <shortName>CLIP</shortName>
        </recommendedName>
    </component>
    <component>
        <recommendedName>
            <fullName>Lipotropin beta</fullName>
        </recommendedName>
        <alternativeName>
            <fullName>Beta-LPH</fullName>
        </alternativeName>
    </component>
    <component>
        <recommendedName>
            <fullName>Lipotropin gamma</fullName>
        </recommendedName>
        <alternativeName>
            <fullName>Gamma-LPH</fullName>
        </alternativeName>
    </component>
    <component>
        <recommendedName>
            <fullName>Melanocyte-stimulating hormone beta</fullName>
            <shortName>Beta-MSH</shortName>
        </recommendedName>
        <alternativeName>
            <fullName>Melanotropin beta</fullName>
        </alternativeName>
    </component>
    <component>
        <recommendedName>
            <fullName>Beta-endorphin</fullName>
        </recommendedName>
    </component>
    <component>
        <recommendedName>
            <fullName>Met-enkephalin</fullName>
        </recommendedName>
    </component>
</protein>